<sequence length="334" mass="36728">MGMKKNRPRRGSLAFSPRKRAKKLVPKIRSWPADKKVGLQAFPVYKAGTTHALLVENNPKSPNNGQEVFSPVTVLETPEITVAGIRAYGKTTKGLKALTEVWAKQQDKELGRKLTVTKKEEIKTVESLDAVLEKTVDLRVIVHTNPKTTGIPKKKPEVVEIRVGGSSVAEKLAYAKDILGKTLSINDVFETGEFIDTLAVTKGKGFQGPVKRWGVKIQFGKHQRKGVGRQTGSIGPWRPKRVMWTVPLAGQMGFHQRTEYNKRILKLGSEGAEITPKGGFLNYGAVKNGYVVVKGTVQGPAKRLVVLRGAVRPAEDKFGLPEVTYISKESKQGN</sequence>
<accession>A6UQJ0</accession>
<name>RL3_METVS</name>
<reference key="1">
    <citation type="submission" date="2007-06" db="EMBL/GenBank/DDBJ databases">
        <title>Complete sequence of Methanococcus vannielii SB.</title>
        <authorList>
            <consortium name="US DOE Joint Genome Institute"/>
            <person name="Copeland A."/>
            <person name="Lucas S."/>
            <person name="Lapidus A."/>
            <person name="Barry K."/>
            <person name="Glavina del Rio T."/>
            <person name="Dalin E."/>
            <person name="Tice H."/>
            <person name="Pitluck S."/>
            <person name="Chain P."/>
            <person name="Malfatti S."/>
            <person name="Shin M."/>
            <person name="Vergez L."/>
            <person name="Schmutz J."/>
            <person name="Larimer F."/>
            <person name="Land M."/>
            <person name="Hauser L."/>
            <person name="Kyrpides N."/>
            <person name="Anderson I."/>
            <person name="Sieprawska-Lupa M."/>
            <person name="Whitman W.B."/>
            <person name="Richardson P."/>
        </authorList>
    </citation>
    <scope>NUCLEOTIDE SEQUENCE [LARGE SCALE GENOMIC DNA]</scope>
    <source>
        <strain>ATCC 35089 / DSM 1224 / JCM 13029 / OCM 148 / SB</strain>
    </source>
</reference>
<comment type="function">
    <text evidence="1">One of the primary rRNA binding proteins, it binds directly near the 3'-end of the 23S rRNA, where it nucleates assembly of the 50S subunit.</text>
</comment>
<comment type="subunit">
    <text evidence="1">Part of the 50S ribosomal subunit. Forms a cluster with proteins L14 and L24e.</text>
</comment>
<comment type="similarity">
    <text evidence="1">Belongs to the universal ribosomal protein uL3 family.</text>
</comment>
<gene>
    <name evidence="1" type="primary">rpl3</name>
    <name type="ordered locus">Mevan_0857</name>
</gene>
<feature type="chain" id="PRO_1000052085" description="Large ribosomal subunit protein uL3">
    <location>
        <begin position="1"/>
        <end position="334"/>
    </location>
</feature>
<feature type="region of interest" description="Disordered" evidence="2">
    <location>
        <begin position="1"/>
        <end position="21"/>
    </location>
</feature>
<feature type="compositionally biased region" description="Basic residues" evidence="2">
    <location>
        <begin position="1"/>
        <end position="10"/>
    </location>
</feature>
<organism>
    <name type="scientific">Methanococcus vannielii (strain ATCC 35089 / DSM 1224 / JCM 13029 / OCM 148 / SB)</name>
    <dbReference type="NCBI Taxonomy" id="406327"/>
    <lineage>
        <taxon>Archaea</taxon>
        <taxon>Methanobacteriati</taxon>
        <taxon>Methanobacteriota</taxon>
        <taxon>Methanomada group</taxon>
        <taxon>Methanococci</taxon>
        <taxon>Methanococcales</taxon>
        <taxon>Methanococcaceae</taxon>
        <taxon>Methanococcus</taxon>
    </lineage>
</organism>
<protein>
    <recommendedName>
        <fullName evidence="1">Large ribosomal subunit protein uL3</fullName>
    </recommendedName>
    <alternativeName>
        <fullName evidence="3">50S ribosomal protein L3</fullName>
    </alternativeName>
</protein>
<dbReference type="EMBL" id="CP000742">
    <property type="protein sequence ID" value="ABR54762.1"/>
    <property type="molecule type" value="Genomic_DNA"/>
</dbReference>
<dbReference type="RefSeq" id="WP_011972663.1">
    <property type="nucleotide sequence ID" value="NC_009634.1"/>
</dbReference>
<dbReference type="SMR" id="A6UQJ0"/>
<dbReference type="STRING" id="406327.Mevan_0857"/>
<dbReference type="GeneID" id="5324917"/>
<dbReference type="KEGG" id="mvn:Mevan_0857"/>
<dbReference type="eggNOG" id="arCOG04070">
    <property type="taxonomic scope" value="Archaea"/>
</dbReference>
<dbReference type="HOGENOM" id="CLU_033361_2_0_2"/>
<dbReference type="OrthoDB" id="6121at2157"/>
<dbReference type="Proteomes" id="UP000001107">
    <property type="component" value="Chromosome"/>
</dbReference>
<dbReference type="GO" id="GO:0022625">
    <property type="term" value="C:cytosolic large ribosomal subunit"/>
    <property type="evidence" value="ECO:0007669"/>
    <property type="project" value="TreeGrafter"/>
</dbReference>
<dbReference type="GO" id="GO:0019843">
    <property type="term" value="F:rRNA binding"/>
    <property type="evidence" value="ECO:0007669"/>
    <property type="project" value="UniProtKB-UniRule"/>
</dbReference>
<dbReference type="GO" id="GO:0003735">
    <property type="term" value="F:structural constituent of ribosome"/>
    <property type="evidence" value="ECO:0007669"/>
    <property type="project" value="InterPro"/>
</dbReference>
<dbReference type="GO" id="GO:0006412">
    <property type="term" value="P:translation"/>
    <property type="evidence" value="ECO:0007669"/>
    <property type="project" value="UniProtKB-UniRule"/>
</dbReference>
<dbReference type="Gene3D" id="3.30.1430.10">
    <property type="match status" value="1"/>
</dbReference>
<dbReference type="Gene3D" id="4.10.960.10">
    <property type="entry name" value="Ribosomal protein L3, domain 3"/>
    <property type="match status" value="1"/>
</dbReference>
<dbReference type="Gene3D" id="2.40.30.10">
    <property type="entry name" value="Translation factors"/>
    <property type="match status" value="1"/>
</dbReference>
<dbReference type="HAMAP" id="MF_01325_A">
    <property type="entry name" value="Ribosomal_uL3_A"/>
    <property type="match status" value="1"/>
</dbReference>
<dbReference type="InterPro" id="IPR045077">
    <property type="entry name" value="L3_arc_euk"/>
</dbReference>
<dbReference type="InterPro" id="IPR044892">
    <property type="entry name" value="Ribosomal_L3_dom_3_arc_sf"/>
</dbReference>
<dbReference type="InterPro" id="IPR000597">
    <property type="entry name" value="Ribosomal_uL3"/>
</dbReference>
<dbReference type="InterPro" id="IPR019928">
    <property type="entry name" value="Ribosomal_uL3_arc"/>
</dbReference>
<dbReference type="InterPro" id="IPR019926">
    <property type="entry name" value="Ribosomal_uL3_CS"/>
</dbReference>
<dbReference type="InterPro" id="IPR009000">
    <property type="entry name" value="Transl_B-barrel_sf"/>
</dbReference>
<dbReference type="NCBIfam" id="TIGR03626">
    <property type="entry name" value="L3_arch"/>
    <property type="match status" value="1"/>
</dbReference>
<dbReference type="NCBIfam" id="NF003261">
    <property type="entry name" value="PRK04231.1"/>
    <property type="match status" value="1"/>
</dbReference>
<dbReference type="PANTHER" id="PTHR11363">
    <property type="entry name" value="60S RIBOSOMAL PROTEIN L3-RELATED"/>
    <property type="match status" value="1"/>
</dbReference>
<dbReference type="PANTHER" id="PTHR11363:SF5">
    <property type="entry name" value="LARGE RIBOSOMAL SUBUNIT PROTEIN UL3"/>
    <property type="match status" value="1"/>
</dbReference>
<dbReference type="Pfam" id="PF00297">
    <property type="entry name" value="Ribosomal_L3"/>
    <property type="match status" value="1"/>
</dbReference>
<dbReference type="SUPFAM" id="SSF50447">
    <property type="entry name" value="Translation proteins"/>
    <property type="match status" value="1"/>
</dbReference>
<dbReference type="PROSITE" id="PS00474">
    <property type="entry name" value="RIBOSOMAL_L3"/>
    <property type="match status" value="1"/>
</dbReference>
<evidence type="ECO:0000255" key="1">
    <source>
        <dbReference type="HAMAP-Rule" id="MF_01325"/>
    </source>
</evidence>
<evidence type="ECO:0000256" key="2">
    <source>
        <dbReference type="SAM" id="MobiDB-lite"/>
    </source>
</evidence>
<evidence type="ECO:0000305" key="3"/>
<proteinExistence type="inferred from homology"/>
<keyword id="KW-0687">Ribonucleoprotein</keyword>
<keyword id="KW-0689">Ribosomal protein</keyword>
<keyword id="KW-0694">RNA-binding</keyword>
<keyword id="KW-0699">rRNA-binding</keyword>